<evidence type="ECO:0000255" key="1">
    <source>
        <dbReference type="HAMAP-Rule" id="MF_00523"/>
    </source>
</evidence>
<reference key="1">
    <citation type="journal article" date="2009" name="Genome Biol.">
        <title>Genomic and genetic analyses of diversity and plant interactions of Pseudomonas fluorescens.</title>
        <authorList>
            <person name="Silby M.W."/>
            <person name="Cerdeno-Tarraga A.M."/>
            <person name="Vernikos G.S."/>
            <person name="Giddens S.R."/>
            <person name="Jackson R.W."/>
            <person name="Preston G.M."/>
            <person name="Zhang X.-X."/>
            <person name="Moon C.D."/>
            <person name="Gehrig S.M."/>
            <person name="Godfrey S.A.C."/>
            <person name="Knight C.G."/>
            <person name="Malone J.G."/>
            <person name="Robinson Z."/>
            <person name="Spiers A.J."/>
            <person name="Harris S."/>
            <person name="Challis G.L."/>
            <person name="Yaxley A.M."/>
            <person name="Harris D."/>
            <person name="Seeger K."/>
            <person name="Murphy L."/>
            <person name="Rutter S."/>
            <person name="Squares R."/>
            <person name="Quail M.A."/>
            <person name="Saunders E."/>
            <person name="Mavromatis K."/>
            <person name="Brettin T.S."/>
            <person name="Bentley S.D."/>
            <person name="Hothersall J."/>
            <person name="Stephens E."/>
            <person name="Thomas C.M."/>
            <person name="Parkhill J."/>
            <person name="Levy S.B."/>
            <person name="Rainey P.B."/>
            <person name="Thomson N.R."/>
        </authorList>
    </citation>
    <scope>NUCLEOTIDE SEQUENCE [LARGE SCALE GENOMIC DNA]</scope>
    <source>
        <strain>Pf0-1</strain>
    </source>
</reference>
<feature type="chain" id="PRO_0000264414" description="UDP-3-O-acylglucosamine N-acyltransferase">
    <location>
        <begin position="1"/>
        <end position="351"/>
    </location>
</feature>
<feature type="active site" description="Proton acceptor" evidence="1">
    <location>
        <position position="240"/>
    </location>
</feature>
<gene>
    <name evidence="1" type="primary">lpxD</name>
    <name type="ordered locus">Pfl01_1111</name>
</gene>
<dbReference type="EC" id="2.3.1.191" evidence="1"/>
<dbReference type="EMBL" id="CP000094">
    <property type="protein sequence ID" value="ABA72854.1"/>
    <property type="molecule type" value="Genomic_DNA"/>
</dbReference>
<dbReference type="RefSeq" id="WP_011332690.1">
    <property type="nucleotide sequence ID" value="NC_007492.2"/>
</dbReference>
<dbReference type="SMR" id="Q3KHA2"/>
<dbReference type="KEGG" id="pfo:Pfl01_1111"/>
<dbReference type="eggNOG" id="COG1044">
    <property type="taxonomic scope" value="Bacteria"/>
</dbReference>
<dbReference type="HOGENOM" id="CLU_049865_0_1_6"/>
<dbReference type="UniPathway" id="UPA00973"/>
<dbReference type="Proteomes" id="UP000002704">
    <property type="component" value="Chromosome"/>
</dbReference>
<dbReference type="GO" id="GO:0016020">
    <property type="term" value="C:membrane"/>
    <property type="evidence" value="ECO:0007669"/>
    <property type="project" value="GOC"/>
</dbReference>
<dbReference type="GO" id="GO:0016410">
    <property type="term" value="F:N-acyltransferase activity"/>
    <property type="evidence" value="ECO:0007669"/>
    <property type="project" value="InterPro"/>
</dbReference>
<dbReference type="GO" id="GO:0009245">
    <property type="term" value="P:lipid A biosynthetic process"/>
    <property type="evidence" value="ECO:0007669"/>
    <property type="project" value="UniProtKB-UniRule"/>
</dbReference>
<dbReference type="CDD" id="cd03352">
    <property type="entry name" value="LbH_LpxD"/>
    <property type="match status" value="1"/>
</dbReference>
<dbReference type="Gene3D" id="1.20.5.170">
    <property type="match status" value="1"/>
</dbReference>
<dbReference type="Gene3D" id="2.160.10.10">
    <property type="entry name" value="Hexapeptide repeat proteins"/>
    <property type="match status" value="1"/>
</dbReference>
<dbReference type="Gene3D" id="3.40.1390.10">
    <property type="entry name" value="MurE/MurF, N-terminal domain"/>
    <property type="match status" value="1"/>
</dbReference>
<dbReference type="HAMAP" id="MF_00523">
    <property type="entry name" value="LpxD"/>
    <property type="match status" value="1"/>
</dbReference>
<dbReference type="InterPro" id="IPR001451">
    <property type="entry name" value="Hexapep"/>
</dbReference>
<dbReference type="InterPro" id="IPR018357">
    <property type="entry name" value="Hexapep_transf_CS"/>
</dbReference>
<dbReference type="InterPro" id="IPR007691">
    <property type="entry name" value="LpxD"/>
</dbReference>
<dbReference type="InterPro" id="IPR011004">
    <property type="entry name" value="Trimer_LpxA-like_sf"/>
</dbReference>
<dbReference type="InterPro" id="IPR020573">
    <property type="entry name" value="UDP_GlcNAc_AcTrfase_non-rep"/>
</dbReference>
<dbReference type="NCBIfam" id="TIGR01853">
    <property type="entry name" value="lipid_A_lpxD"/>
    <property type="match status" value="1"/>
</dbReference>
<dbReference type="NCBIfam" id="NF002060">
    <property type="entry name" value="PRK00892.1"/>
    <property type="match status" value="1"/>
</dbReference>
<dbReference type="PANTHER" id="PTHR43378">
    <property type="entry name" value="UDP-3-O-ACYLGLUCOSAMINE N-ACYLTRANSFERASE"/>
    <property type="match status" value="1"/>
</dbReference>
<dbReference type="PANTHER" id="PTHR43378:SF2">
    <property type="entry name" value="UDP-3-O-ACYLGLUCOSAMINE N-ACYLTRANSFERASE 1, MITOCHONDRIAL-RELATED"/>
    <property type="match status" value="1"/>
</dbReference>
<dbReference type="Pfam" id="PF00132">
    <property type="entry name" value="Hexapep"/>
    <property type="match status" value="2"/>
</dbReference>
<dbReference type="Pfam" id="PF04613">
    <property type="entry name" value="LpxD"/>
    <property type="match status" value="1"/>
</dbReference>
<dbReference type="SUPFAM" id="SSF51161">
    <property type="entry name" value="Trimeric LpxA-like enzymes"/>
    <property type="match status" value="1"/>
</dbReference>
<dbReference type="PROSITE" id="PS00101">
    <property type="entry name" value="HEXAPEP_TRANSFERASES"/>
    <property type="match status" value="1"/>
</dbReference>
<name>LPXD_PSEPF</name>
<sequence>MTVTIKLGQLAEFLGATLSGDPEKQITGLATLQEAGPAQLSFLANPQYRKYLAGTQAAALLLKAADAEGYAGNALVVPDPYLAYARISHLFDPKPKATAGIHPTAVIAEDAVVDPSASVGPFVVIEAGARIGADVTLGAHCVVGARSEIGEGGWLAPRVTLYHDVRIGKRVVIQSGAVLGGEGFGFANEKGVWQKIAQIGGVTIGDDVEIGVNTAIDRGALADTVIGNGVKLDNQIQIAHNVQVGDHTAMAACVGISGSTKIGKHCMLAGGVGLVGHIDICDNVFLTGMTMVTHSITEPGAYSSGTAMQPAAEWRKSAARIRQLDDIARRLKQLEKRSGEVTPDGNASSEG</sequence>
<comment type="function">
    <text evidence="1">Catalyzes the N-acylation of UDP-3-O-acylglucosamine using 3-hydroxyacyl-ACP as the acyl donor. Is involved in the biosynthesis of lipid A, a phosphorylated glycolipid that anchors the lipopolysaccharide to the outer membrane of the cell.</text>
</comment>
<comment type="catalytic activity">
    <reaction evidence="1">
        <text>a UDP-3-O-[(3R)-3-hydroxyacyl]-alpha-D-glucosamine + a (3R)-hydroxyacyl-[ACP] = a UDP-2-N,3-O-bis[(3R)-3-hydroxyacyl]-alpha-D-glucosamine + holo-[ACP] + H(+)</text>
        <dbReference type="Rhea" id="RHEA:53836"/>
        <dbReference type="Rhea" id="RHEA-COMP:9685"/>
        <dbReference type="Rhea" id="RHEA-COMP:9945"/>
        <dbReference type="ChEBI" id="CHEBI:15378"/>
        <dbReference type="ChEBI" id="CHEBI:64479"/>
        <dbReference type="ChEBI" id="CHEBI:78827"/>
        <dbReference type="ChEBI" id="CHEBI:137740"/>
        <dbReference type="ChEBI" id="CHEBI:137748"/>
        <dbReference type="EC" id="2.3.1.191"/>
    </reaction>
</comment>
<comment type="pathway">
    <text evidence="1">Bacterial outer membrane biogenesis; LPS lipid A biosynthesis.</text>
</comment>
<comment type="subunit">
    <text evidence="1">Homotrimer.</text>
</comment>
<comment type="similarity">
    <text evidence="1">Belongs to the transferase hexapeptide repeat family. LpxD subfamily.</text>
</comment>
<accession>Q3KHA2</accession>
<organism>
    <name type="scientific">Pseudomonas fluorescens (strain Pf0-1)</name>
    <dbReference type="NCBI Taxonomy" id="205922"/>
    <lineage>
        <taxon>Bacteria</taxon>
        <taxon>Pseudomonadati</taxon>
        <taxon>Pseudomonadota</taxon>
        <taxon>Gammaproteobacteria</taxon>
        <taxon>Pseudomonadales</taxon>
        <taxon>Pseudomonadaceae</taxon>
        <taxon>Pseudomonas</taxon>
    </lineage>
</organism>
<protein>
    <recommendedName>
        <fullName evidence="1">UDP-3-O-acylglucosamine N-acyltransferase</fullName>
        <ecNumber evidence="1">2.3.1.191</ecNumber>
    </recommendedName>
</protein>
<proteinExistence type="inferred from homology"/>
<keyword id="KW-0012">Acyltransferase</keyword>
<keyword id="KW-0441">Lipid A biosynthesis</keyword>
<keyword id="KW-0444">Lipid biosynthesis</keyword>
<keyword id="KW-0443">Lipid metabolism</keyword>
<keyword id="KW-0677">Repeat</keyword>
<keyword id="KW-0808">Transferase</keyword>